<reference key="1">
    <citation type="journal article" date="2008" name="J. Bacteriol.">
        <title>The pangenome structure of Escherichia coli: comparative genomic analysis of E. coli commensal and pathogenic isolates.</title>
        <authorList>
            <person name="Rasko D.A."/>
            <person name="Rosovitz M.J."/>
            <person name="Myers G.S.A."/>
            <person name="Mongodin E.F."/>
            <person name="Fricke W.F."/>
            <person name="Gajer P."/>
            <person name="Crabtree J."/>
            <person name="Sebaihia M."/>
            <person name="Thomson N.R."/>
            <person name="Chaudhuri R."/>
            <person name="Henderson I.R."/>
            <person name="Sperandio V."/>
            <person name="Ravel J."/>
        </authorList>
    </citation>
    <scope>NUCLEOTIDE SEQUENCE [LARGE SCALE GENOMIC DNA]</scope>
    <source>
        <strain>HS</strain>
    </source>
</reference>
<feature type="chain" id="PRO_0000320810" description="Protein translocase subunit SecA">
    <location>
        <begin position="1"/>
        <end position="901"/>
    </location>
</feature>
<feature type="region of interest" description="Disordered" evidence="2">
    <location>
        <begin position="859"/>
        <end position="901"/>
    </location>
</feature>
<feature type="compositionally biased region" description="Basic residues" evidence="2">
    <location>
        <begin position="891"/>
        <end position="901"/>
    </location>
</feature>
<feature type="binding site" evidence="1">
    <location>
        <position position="87"/>
    </location>
    <ligand>
        <name>ATP</name>
        <dbReference type="ChEBI" id="CHEBI:30616"/>
    </ligand>
</feature>
<feature type="binding site" evidence="1">
    <location>
        <begin position="105"/>
        <end position="109"/>
    </location>
    <ligand>
        <name>ATP</name>
        <dbReference type="ChEBI" id="CHEBI:30616"/>
    </ligand>
</feature>
<feature type="binding site" evidence="1">
    <location>
        <position position="512"/>
    </location>
    <ligand>
        <name>ATP</name>
        <dbReference type="ChEBI" id="CHEBI:30616"/>
    </ligand>
</feature>
<feature type="binding site" evidence="1">
    <location>
        <position position="885"/>
    </location>
    <ligand>
        <name>Zn(2+)</name>
        <dbReference type="ChEBI" id="CHEBI:29105"/>
    </ligand>
</feature>
<feature type="binding site" evidence="1">
    <location>
        <position position="887"/>
    </location>
    <ligand>
        <name>Zn(2+)</name>
        <dbReference type="ChEBI" id="CHEBI:29105"/>
    </ligand>
</feature>
<feature type="binding site" evidence="1">
    <location>
        <position position="896"/>
    </location>
    <ligand>
        <name>Zn(2+)</name>
        <dbReference type="ChEBI" id="CHEBI:29105"/>
    </ligand>
</feature>
<feature type="binding site" evidence="1">
    <location>
        <position position="897"/>
    </location>
    <ligand>
        <name>Zn(2+)</name>
        <dbReference type="ChEBI" id="CHEBI:29105"/>
    </ligand>
</feature>
<sequence length="901" mass="102051">MLIKLLTKVFGSRNDRTLRRMRKVVNIINAMEPEMEKLSDEELKGKTAEFRARLEKGEVLENLIPEAFAVVREASKRVFGMRHFDVQLLGGMVLNERCIAEMRTGEGKTLTATLPAYLNALTGKGVHVVTVNDYLAQRDAENNRPLFEFLGLTVGINLPGMPAPAKREAYAADITYGTNNEYGFDYLRDNMAFSPEERVQRKLHYALVDEVDSILIDEARTPLIISGPAEDSSEMYKRVNKIIPHLIRQEKEDSETFQGEGHFSVDEKSRQVNLTERGLVLIEELLVKEGIMDEGESLYSPANIMLMHHVTAALRAHALFTRDVDYIVKDGEVIIVDEHTGRTMQGRRWSDGLHQAVEAKEGVQIQNENQTLASITFQNYFRLYEKLAGMTGTADTEAFEFSSIYKLDTVVVPTNRPMIRKDLPDLVYMTEAEKIQAIIEDIKERTAKGQPVLVGTISIEKSELVSNELTKAGIKHNVLNAKFHANEAAIVAQAGYPAAVTIATNMAGRGTDIVLGGSWQAEVAALENPTVEQIEKIKADWQVRHDAVLEAGGLHIIGTERHESRRIDNQLRGRSGRQGDAGSSRFYLSMEDALMRIFASDRVSGMMRKLGMKPGEAIEHPWVTKAIANAQRKVESRNFDIRKQLLEYDDVANDQRRAIYSQRNELLDVSDVSETINSIREDVFKATIDAYIPPQSLEEMWDIPGLQERLKNDFDLDLPIAEWLDKEPELHEETLRERILAQSIEVYQRKEEVVGAEMMRHFEKGVMLQTLDSLWKEHLAAMDYLRQGIHLRGYAQKDPKQEYKRESFSMFAAMLESLKYEVISTLSKVQVRMPEEVEELEQQRRMEAERLAQMQQLSHQDDDSAAAAALAAQTGERKVGRNDPCPCGSGKKYKQCHGRLQ</sequence>
<gene>
    <name evidence="1" type="primary">secA</name>
    <name type="ordered locus">EcHS_A0104</name>
</gene>
<name>SECA_ECOHS</name>
<comment type="function">
    <text evidence="1">Part of the Sec protein translocase complex. Interacts with the SecYEG preprotein conducting channel. Has a central role in coupling the hydrolysis of ATP to the transfer of proteins into and across the cell membrane, serving both as a receptor for the preprotein-SecB complex and as an ATP-driven molecular motor driving the stepwise translocation of polypeptide chains across the membrane.</text>
</comment>
<comment type="catalytic activity">
    <reaction evidence="1">
        <text>ATP + H2O + cellular proteinSide 1 = ADP + phosphate + cellular proteinSide 2.</text>
        <dbReference type="EC" id="7.4.2.8"/>
    </reaction>
</comment>
<comment type="cofactor">
    <cofactor evidence="1">
        <name>Zn(2+)</name>
        <dbReference type="ChEBI" id="CHEBI:29105"/>
    </cofactor>
    <text evidence="1">May bind 1 zinc ion per subunit.</text>
</comment>
<comment type="subunit">
    <text evidence="1">Monomer and homodimer. Part of the essential Sec protein translocation apparatus which comprises SecA, SecYEG and auxiliary proteins SecDF-YajC and YidC.</text>
</comment>
<comment type="subcellular location">
    <subcellularLocation>
        <location evidence="1">Cell inner membrane</location>
        <topology evidence="1">Peripheral membrane protein</topology>
        <orientation evidence="1">Cytoplasmic side</orientation>
    </subcellularLocation>
    <subcellularLocation>
        <location evidence="1">Cytoplasm</location>
    </subcellularLocation>
    <text evidence="1">Distribution is 50-50.</text>
</comment>
<comment type="induction">
    <text evidence="1">Repressed under conditions of excess protein secretion capacity and derepressed when protein secretion becomes limiting. This is regulated by SecM.</text>
</comment>
<comment type="similarity">
    <text evidence="1">Belongs to the SecA family.</text>
</comment>
<proteinExistence type="inferred from homology"/>
<keyword id="KW-0067">ATP-binding</keyword>
<keyword id="KW-0997">Cell inner membrane</keyword>
<keyword id="KW-1003">Cell membrane</keyword>
<keyword id="KW-0963">Cytoplasm</keyword>
<keyword id="KW-0472">Membrane</keyword>
<keyword id="KW-0479">Metal-binding</keyword>
<keyword id="KW-0547">Nucleotide-binding</keyword>
<keyword id="KW-0653">Protein transport</keyword>
<keyword id="KW-1278">Translocase</keyword>
<keyword id="KW-0811">Translocation</keyword>
<keyword id="KW-0813">Transport</keyword>
<keyword id="KW-0862">Zinc</keyword>
<accession>A7ZW50</accession>
<dbReference type="EC" id="7.4.2.8" evidence="1"/>
<dbReference type="EMBL" id="CP000802">
    <property type="protein sequence ID" value="ABV04504.1"/>
    <property type="molecule type" value="Genomic_DNA"/>
</dbReference>
<dbReference type="RefSeq" id="WP_000905795.1">
    <property type="nucleotide sequence ID" value="NC_009800.1"/>
</dbReference>
<dbReference type="SMR" id="A7ZW50"/>
<dbReference type="GeneID" id="75202085"/>
<dbReference type="KEGG" id="ecx:EcHS_A0104"/>
<dbReference type="HOGENOM" id="CLU_005314_3_0_6"/>
<dbReference type="GO" id="GO:0031522">
    <property type="term" value="C:cell envelope Sec protein transport complex"/>
    <property type="evidence" value="ECO:0007669"/>
    <property type="project" value="TreeGrafter"/>
</dbReference>
<dbReference type="GO" id="GO:0005829">
    <property type="term" value="C:cytosol"/>
    <property type="evidence" value="ECO:0007669"/>
    <property type="project" value="TreeGrafter"/>
</dbReference>
<dbReference type="GO" id="GO:0005886">
    <property type="term" value="C:plasma membrane"/>
    <property type="evidence" value="ECO:0007669"/>
    <property type="project" value="UniProtKB-SubCell"/>
</dbReference>
<dbReference type="GO" id="GO:0005524">
    <property type="term" value="F:ATP binding"/>
    <property type="evidence" value="ECO:0007669"/>
    <property type="project" value="UniProtKB-UniRule"/>
</dbReference>
<dbReference type="GO" id="GO:0046872">
    <property type="term" value="F:metal ion binding"/>
    <property type="evidence" value="ECO:0007669"/>
    <property type="project" value="UniProtKB-KW"/>
</dbReference>
<dbReference type="GO" id="GO:0008564">
    <property type="term" value="F:protein-exporting ATPase activity"/>
    <property type="evidence" value="ECO:0007669"/>
    <property type="project" value="UniProtKB-EC"/>
</dbReference>
<dbReference type="GO" id="GO:0065002">
    <property type="term" value="P:intracellular protein transmembrane transport"/>
    <property type="evidence" value="ECO:0007669"/>
    <property type="project" value="UniProtKB-UniRule"/>
</dbReference>
<dbReference type="GO" id="GO:0017038">
    <property type="term" value="P:protein import"/>
    <property type="evidence" value="ECO:0007669"/>
    <property type="project" value="InterPro"/>
</dbReference>
<dbReference type="GO" id="GO:0006605">
    <property type="term" value="P:protein targeting"/>
    <property type="evidence" value="ECO:0007669"/>
    <property type="project" value="UniProtKB-UniRule"/>
</dbReference>
<dbReference type="GO" id="GO:0043952">
    <property type="term" value="P:protein transport by the Sec complex"/>
    <property type="evidence" value="ECO:0007669"/>
    <property type="project" value="TreeGrafter"/>
</dbReference>
<dbReference type="CDD" id="cd17928">
    <property type="entry name" value="DEXDc_SecA"/>
    <property type="match status" value="1"/>
</dbReference>
<dbReference type="CDD" id="cd18803">
    <property type="entry name" value="SF2_C_secA"/>
    <property type="match status" value="1"/>
</dbReference>
<dbReference type="FunFam" id="1.10.3060.10:FF:000001">
    <property type="entry name" value="Preprotein translocase subunit SecA"/>
    <property type="match status" value="1"/>
</dbReference>
<dbReference type="FunFam" id="3.40.50.300:FF:000081">
    <property type="entry name" value="Preprotein translocase subunit SecA"/>
    <property type="match status" value="1"/>
</dbReference>
<dbReference type="FunFam" id="3.40.50.300:FF:000113">
    <property type="entry name" value="Preprotein translocase subunit SecA"/>
    <property type="match status" value="1"/>
</dbReference>
<dbReference type="FunFam" id="3.90.1440.10:FF:000001">
    <property type="entry name" value="Preprotein translocase subunit SecA"/>
    <property type="match status" value="1"/>
</dbReference>
<dbReference type="Gene3D" id="1.10.3060.10">
    <property type="entry name" value="Helical scaffold and wing domains of SecA"/>
    <property type="match status" value="1"/>
</dbReference>
<dbReference type="Gene3D" id="3.40.50.300">
    <property type="entry name" value="P-loop containing nucleotide triphosphate hydrolases"/>
    <property type="match status" value="2"/>
</dbReference>
<dbReference type="Gene3D" id="3.90.1440.10">
    <property type="entry name" value="SecA, preprotein cross-linking domain"/>
    <property type="match status" value="1"/>
</dbReference>
<dbReference type="HAMAP" id="MF_01382">
    <property type="entry name" value="SecA"/>
    <property type="match status" value="1"/>
</dbReference>
<dbReference type="InterPro" id="IPR014001">
    <property type="entry name" value="Helicase_ATP-bd"/>
</dbReference>
<dbReference type="InterPro" id="IPR001650">
    <property type="entry name" value="Helicase_C-like"/>
</dbReference>
<dbReference type="InterPro" id="IPR027417">
    <property type="entry name" value="P-loop_NTPase"/>
</dbReference>
<dbReference type="InterPro" id="IPR004027">
    <property type="entry name" value="SEC_C_motif"/>
</dbReference>
<dbReference type="InterPro" id="IPR000185">
    <property type="entry name" value="SecA"/>
</dbReference>
<dbReference type="InterPro" id="IPR020937">
    <property type="entry name" value="SecA_CS"/>
</dbReference>
<dbReference type="InterPro" id="IPR011115">
    <property type="entry name" value="SecA_DEAD"/>
</dbReference>
<dbReference type="InterPro" id="IPR014018">
    <property type="entry name" value="SecA_motor_DEAD"/>
</dbReference>
<dbReference type="InterPro" id="IPR011130">
    <property type="entry name" value="SecA_preprotein_X-link_dom"/>
</dbReference>
<dbReference type="InterPro" id="IPR044722">
    <property type="entry name" value="SecA_SF2_C"/>
</dbReference>
<dbReference type="InterPro" id="IPR011116">
    <property type="entry name" value="SecA_Wing/Scaffold"/>
</dbReference>
<dbReference type="InterPro" id="IPR036266">
    <property type="entry name" value="SecA_Wing/Scaffold_sf"/>
</dbReference>
<dbReference type="InterPro" id="IPR036670">
    <property type="entry name" value="SecA_X-link_sf"/>
</dbReference>
<dbReference type="NCBIfam" id="NF009538">
    <property type="entry name" value="PRK12904.1"/>
    <property type="match status" value="1"/>
</dbReference>
<dbReference type="NCBIfam" id="TIGR00963">
    <property type="entry name" value="secA"/>
    <property type="match status" value="1"/>
</dbReference>
<dbReference type="PANTHER" id="PTHR30612:SF0">
    <property type="entry name" value="CHLOROPLAST PROTEIN-TRANSPORTING ATPASE"/>
    <property type="match status" value="1"/>
</dbReference>
<dbReference type="PANTHER" id="PTHR30612">
    <property type="entry name" value="SECA INNER MEMBRANE COMPONENT OF SEC PROTEIN SECRETION SYSTEM"/>
    <property type="match status" value="1"/>
</dbReference>
<dbReference type="Pfam" id="PF21090">
    <property type="entry name" value="P-loop_SecA"/>
    <property type="match status" value="1"/>
</dbReference>
<dbReference type="Pfam" id="PF02810">
    <property type="entry name" value="SEC-C"/>
    <property type="match status" value="1"/>
</dbReference>
<dbReference type="Pfam" id="PF07517">
    <property type="entry name" value="SecA_DEAD"/>
    <property type="match status" value="1"/>
</dbReference>
<dbReference type="Pfam" id="PF01043">
    <property type="entry name" value="SecA_PP_bind"/>
    <property type="match status" value="1"/>
</dbReference>
<dbReference type="Pfam" id="PF07516">
    <property type="entry name" value="SecA_SW"/>
    <property type="match status" value="1"/>
</dbReference>
<dbReference type="PRINTS" id="PR00906">
    <property type="entry name" value="SECA"/>
</dbReference>
<dbReference type="SMART" id="SM00957">
    <property type="entry name" value="SecA_DEAD"/>
    <property type="match status" value="1"/>
</dbReference>
<dbReference type="SMART" id="SM00958">
    <property type="entry name" value="SecA_PP_bind"/>
    <property type="match status" value="1"/>
</dbReference>
<dbReference type="SUPFAM" id="SSF81886">
    <property type="entry name" value="Helical scaffold and wing domains of SecA"/>
    <property type="match status" value="1"/>
</dbReference>
<dbReference type="SUPFAM" id="SSF52540">
    <property type="entry name" value="P-loop containing nucleoside triphosphate hydrolases"/>
    <property type="match status" value="2"/>
</dbReference>
<dbReference type="SUPFAM" id="SSF81767">
    <property type="entry name" value="Pre-protein crosslinking domain of SecA"/>
    <property type="match status" value="1"/>
</dbReference>
<dbReference type="PROSITE" id="PS01312">
    <property type="entry name" value="SECA"/>
    <property type="match status" value="1"/>
</dbReference>
<dbReference type="PROSITE" id="PS51196">
    <property type="entry name" value="SECA_MOTOR_DEAD"/>
    <property type="match status" value="1"/>
</dbReference>
<protein>
    <recommendedName>
        <fullName evidence="1">Protein translocase subunit SecA</fullName>
        <ecNumber evidence="1">7.4.2.8</ecNumber>
    </recommendedName>
</protein>
<organism>
    <name type="scientific">Escherichia coli O9:H4 (strain HS)</name>
    <dbReference type="NCBI Taxonomy" id="331112"/>
    <lineage>
        <taxon>Bacteria</taxon>
        <taxon>Pseudomonadati</taxon>
        <taxon>Pseudomonadota</taxon>
        <taxon>Gammaproteobacteria</taxon>
        <taxon>Enterobacterales</taxon>
        <taxon>Enterobacteriaceae</taxon>
        <taxon>Escherichia</taxon>
    </lineage>
</organism>
<evidence type="ECO:0000255" key="1">
    <source>
        <dbReference type="HAMAP-Rule" id="MF_01382"/>
    </source>
</evidence>
<evidence type="ECO:0000256" key="2">
    <source>
        <dbReference type="SAM" id="MobiDB-lite"/>
    </source>
</evidence>